<sequence length="209" mass="22817">MQSTTFTRLLAAAALAATTLFAPATQAQGAQQYVNINPPMPSDTPGKIEVLEFFAYTCPHCAAIEPMVEDWAKTAPQDVVLKQVPIAFNAGMKPLQQLYYTLQALERPDLHPKVFTAIHTERKRLFDKKAMGEWAASQGVDRAKFDSVFDSFSVQTQVQRASQLAEAAHIDGTPAFAVGGRYMTSPVLAGNDYAGALKVVDQLIVQSRK</sequence>
<keyword id="KW-0002">3D-structure</keyword>
<keyword id="KW-1015">Disulfide bond</keyword>
<keyword id="KW-0574">Periplasm</keyword>
<keyword id="KW-0676">Redox-active center</keyword>
<keyword id="KW-0732">Signal</keyword>
<proteinExistence type="evidence at protein level"/>
<protein>
    <recommendedName>
        <fullName>Thiol:disulfide interchange protein DsbA</fullName>
    </recommendedName>
</protein>
<name>DSBA_BORPA</name>
<reference key="1">
    <citation type="journal article" date="2003" name="Nat. Genet.">
        <title>Comparative analysis of the genome sequences of Bordetella pertussis, Bordetella parapertussis and Bordetella bronchiseptica.</title>
        <authorList>
            <person name="Parkhill J."/>
            <person name="Sebaihia M."/>
            <person name="Preston A."/>
            <person name="Murphy L.D."/>
            <person name="Thomson N.R."/>
            <person name="Harris D.E."/>
            <person name="Holden M.T.G."/>
            <person name="Churcher C.M."/>
            <person name="Bentley S.D."/>
            <person name="Mungall K.L."/>
            <person name="Cerdeno-Tarraga A.-M."/>
            <person name="Temple L."/>
            <person name="James K.D."/>
            <person name="Harris B."/>
            <person name="Quail M.A."/>
            <person name="Achtman M."/>
            <person name="Atkin R."/>
            <person name="Baker S."/>
            <person name="Basham D."/>
            <person name="Bason N."/>
            <person name="Cherevach I."/>
            <person name="Chillingworth T."/>
            <person name="Collins M."/>
            <person name="Cronin A."/>
            <person name="Davis P."/>
            <person name="Doggett J."/>
            <person name="Feltwell T."/>
            <person name="Goble A."/>
            <person name="Hamlin N."/>
            <person name="Hauser H."/>
            <person name="Holroyd S."/>
            <person name="Jagels K."/>
            <person name="Leather S."/>
            <person name="Moule S."/>
            <person name="Norberczak H."/>
            <person name="O'Neil S."/>
            <person name="Ormond D."/>
            <person name="Price C."/>
            <person name="Rabbinowitsch E."/>
            <person name="Rutter S."/>
            <person name="Sanders M."/>
            <person name="Saunders D."/>
            <person name="Seeger K."/>
            <person name="Sharp S."/>
            <person name="Simmonds M."/>
            <person name="Skelton J."/>
            <person name="Squares R."/>
            <person name="Squares S."/>
            <person name="Stevens K."/>
            <person name="Unwin L."/>
            <person name="Whitehead S."/>
            <person name="Barrell B.G."/>
            <person name="Maskell D.J."/>
        </authorList>
    </citation>
    <scope>NUCLEOTIDE SEQUENCE [LARGE SCALE GENOMIC DNA]</scope>
    <source>
        <strain>12822 / ATCC BAA-587 / NCTC 13253</strain>
    </source>
</reference>
<comment type="function">
    <text evidence="1">Involved in disulfide-bond formation. Acts by transferring its disulfide bond to other proteins (By similarity).</text>
</comment>
<comment type="subcellular location">
    <subcellularLocation>
        <location evidence="1">Periplasm</location>
    </subcellularLocation>
</comment>
<comment type="similarity">
    <text evidence="4">Belongs to the thioredoxin family. DsbA subfamily.</text>
</comment>
<evidence type="ECO:0000250" key="1"/>
<evidence type="ECO:0000255" key="2"/>
<evidence type="ECO:0000255" key="3">
    <source>
        <dbReference type="PROSITE-ProRule" id="PRU00691"/>
    </source>
</evidence>
<evidence type="ECO:0000305" key="4"/>
<evidence type="ECO:0007829" key="5">
    <source>
        <dbReference type="PDB" id="3HD5"/>
    </source>
</evidence>
<gene>
    <name type="primary">dsbA</name>
    <name type="ordered locus">BPP4354</name>
</gene>
<accession>Q7W2Q0</accession>
<organism>
    <name type="scientific">Bordetella parapertussis (strain 12822 / ATCC BAA-587 / NCTC 13253)</name>
    <dbReference type="NCBI Taxonomy" id="257311"/>
    <lineage>
        <taxon>Bacteria</taxon>
        <taxon>Pseudomonadati</taxon>
        <taxon>Pseudomonadota</taxon>
        <taxon>Betaproteobacteria</taxon>
        <taxon>Burkholderiales</taxon>
        <taxon>Alcaligenaceae</taxon>
        <taxon>Bordetella</taxon>
    </lineage>
</organism>
<feature type="signal peptide" evidence="2">
    <location>
        <begin position="1"/>
        <end position="27"/>
    </location>
</feature>
<feature type="chain" id="PRO_0000245631" description="Thiol:disulfide interchange protein DsbA">
    <location>
        <begin position="28"/>
        <end position="209"/>
    </location>
</feature>
<feature type="domain" description="Thioredoxin" evidence="3">
    <location>
        <begin position="28"/>
        <end position="166"/>
    </location>
</feature>
<feature type="disulfide bond" description="Redox-active" evidence="3">
    <location>
        <begin position="58"/>
        <end position="61"/>
    </location>
</feature>
<feature type="strand" evidence="5">
    <location>
        <begin position="48"/>
        <end position="54"/>
    </location>
</feature>
<feature type="helix" evidence="5">
    <location>
        <begin position="59"/>
        <end position="73"/>
    </location>
</feature>
<feature type="strand" evidence="5">
    <location>
        <begin position="79"/>
        <end position="85"/>
    </location>
</feature>
<feature type="helix" evidence="5">
    <location>
        <begin position="90"/>
        <end position="92"/>
    </location>
</feature>
<feature type="helix" evidence="5">
    <location>
        <begin position="93"/>
        <end position="104"/>
    </location>
</feature>
<feature type="helix" evidence="5">
    <location>
        <begin position="110"/>
        <end position="119"/>
    </location>
</feature>
<feature type="helix" evidence="5">
    <location>
        <begin position="128"/>
        <end position="137"/>
    </location>
</feature>
<feature type="helix" evidence="5">
    <location>
        <begin position="142"/>
        <end position="149"/>
    </location>
</feature>
<feature type="helix" evidence="5">
    <location>
        <begin position="152"/>
        <end position="167"/>
    </location>
</feature>
<feature type="strand" evidence="5">
    <location>
        <begin position="172"/>
        <end position="178"/>
    </location>
</feature>
<feature type="turn" evidence="5">
    <location>
        <begin position="179"/>
        <end position="181"/>
    </location>
</feature>
<feature type="strand" evidence="5">
    <location>
        <begin position="182"/>
        <end position="184"/>
    </location>
</feature>
<feature type="turn" evidence="5">
    <location>
        <begin position="186"/>
        <end position="190"/>
    </location>
</feature>
<feature type="helix" evidence="5">
    <location>
        <begin position="191"/>
        <end position="193"/>
    </location>
</feature>
<feature type="helix" evidence="5">
    <location>
        <begin position="196"/>
        <end position="208"/>
    </location>
</feature>
<dbReference type="EMBL" id="BX640436">
    <property type="protein sequence ID" value="CAE39633.1"/>
    <property type="molecule type" value="Genomic_DNA"/>
</dbReference>
<dbReference type="RefSeq" id="WP_003815939.1">
    <property type="nucleotide sequence ID" value="NC_002928.3"/>
</dbReference>
<dbReference type="PDB" id="3HD5">
    <property type="method" value="X-ray"/>
    <property type="resolution" value="2.35 A"/>
    <property type="chains" value="A/B/C=25-208"/>
</dbReference>
<dbReference type="PDBsum" id="3HD5"/>
<dbReference type="SMR" id="Q7W2Q0"/>
<dbReference type="KEGG" id="bpa:BPP4354"/>
<dbReference type="HOGENOM" id="CLU_088255_1_0_4"/>
<dbReference type="EvolutionaryTrace" id="Q7W2Q0"/>
<dbReference type="Proteomes" id="UP000001421">
    <property type="component" value="Chromosome"/>
</dbReference>
<dbReference type="GO" id="GO:0042597">
    <property type="term" value="C:periplasmic space"/>
    <property type="evidence" value="ECO:0007669"/>
    <property type="project" value="UniProtKB-SubCell"/>
</dbReference>
<dbReference type="GO" id="GO:0015036">
    <property type="term" value="F:disulfide oxidoreductase activity"/>
    <property type="evidence" value="ECO:0007669"/>
    <property type="project" value="UniProtKB-ARBA"/>
</dbReference>
<dbReference type="CDD" id="cd03019">
    <property type="entry name" value="DsbA_DsbA"/>
    <property type="match status" value="1"/>
</dbReference>
<dbReference type="Gene3D" id="3.40.30.10">
    <property type="entry name" value="Glutaredoxin"/>
    <property type="match status" value="1"/>
</dbReference>
<dbReference type="InterPro" id="IPR001853">
    <property type="entry name" value="DSBA-like_thioredoxin_dom"/>
</dbReference>
<dbReference type="InterPro" id="IPR023205">
    <property type="entry name" value="DsbA/DsbL"/>
</dbReference>
<dbReference type="InterPro" id="IPR050824">
    <property type="entry name" value="Thiol_disulfide_DsbA"/>
</dbReference>
<dbReference type="InterPro" id="IPR036249">
    <property type="entry name" value="Thioredoxin-like_sf"/>
</dbReference>
<dbReference type="InterPro" id="IPR017937">
    <property type="entry name" value="Thioredoxin_CS"/>
</dbReference>
<dbReference type="InterPro" id="IPR013766">
    <property type="entry name" value="Thioredoxin_domain"/>
</dbReference>
<dbReference type="PANTHER" id="PTHR35891">
    <property type="entry name" value="THIOL:DISULFIDE INTERCHANGE PROTEIN DSBA"/>
    <property type="match status" value="1"/>
</dbReference>
<dbReference type="PANTHER" id="PTHR35891:SF3">
    <property type="entry name" value="THIOL:DISULFIDE INTERCHANGE PROTEIN DSBL"/>
    <property type="match status" value="1"/>
</dbReference>
<dbReference type="Pfam" id="PF01323">
    <property type="entry name" value="DSBA"/>
    <property type="match status" value="1"/>
</dbReference>
<dbReference type="Pfam" id="PF00085">
    <property type="entry name" value="Thioredoxin"/>
    <property type="match status" value="1"/>
</dbReference>
<dbReference type="PIRSF" id="PIRSF001488">
    <property type="entry name" value="Tdi_protein"/>
    <property type="match status" value="1"/>
</dbReference>
<dbReference type="SUPFAM" id="SSF52833">
    <property type="entry name" value="Thioredoxin-like"/>
    <property type="match status" value="1"/>
</dbReference>
<dbReference type="PROSITE" id="PS00194">
    <property type="entry name" value="THIOREDOXIN_1"/>
    <property type="match status" value="1"/>
</dbReference>
<dbReference type="PROSITE" id="PS51352">
    <property type="entry name" value="THIOREDOXIN_2"/>
    <property type="match status" value="1"/>
</dbReference>